<keyword id="KW-0002">3D-structure</keyword>
<keyword id="KW-0106">Calcium</keyword>
<keyword id="KW-0479">Metal-binding</keyword>
<keyword id="KW-1267">Proteomics identification</keyword>
<keyword id="KW-1185">Reference proteome</keyword>
<keyword id="KW-0677">Repeat</keyword>
<evidence type="ECO:0000255" key="1">
    <source>
        <dbReference type="PROSITE-ProRule" id="PRU00448"/>
    </source>
</evidence>
<evidence type="ECO:0000269" key="2">
    <source>
    </source>
</evidence>
<evidence type="ECO:0000269" key="3">
    <source>
    </source>
</evidence>
<evidence type="ECO:0000269" key="4">
    <source>
    </source>
</evidence>
<evidence type="ECO:0000305" key="5"/>
<evidence type="ECO:0007829" key="6">
    <source>
        <dbReference type="PDB" id="1GGZ"/>
    </source>
</evidence>
<organism>
    <name type="scientific">Homo sapiens</name>
    <name type="common">Human</name>
    <dbReference type="NCBI Taxonomy" id="9606"/>
    <lineage>
        <taxon>Eukaryota</taxon>
        <taxon>Metazoa</taxon>
        <taxon>Chordata</taxon>
        <taxon>Craniata</taxon>
        <taxon>Vertebrata</taxon>
        <taxon>Euteleostomi</taxon>
        <taxon>Mammalia</taxon>
        <taxon>Eutheria</taxon>
        <taxon>Euarchontoglires</taxon>
        <taxon>Primates</taxon>
        <taxon>Haplorrhini</taxon>
        <taxon>Catarrhini</taxon>
        <taxon>Hominidae</taxon>
        <taxon>Homo</taxon>
    </lineage>
</organism>
<proteinExistence type="evidence at protein level"/>
<protein>
    <recommendedName>
        <fullName>Calmodulin-like protein 3</fullName>
    </recommendedName>
    <alternativeName>
        <fullName>CaM-like protein</fullName>
        <shortName>CLP</shortName>
    </alternativeName>
    <alternativeName>
        <fullName>Calmodulin-related protein NB-1</fullName>
    </alternativeName>
</protein>
<dbReference type="EMBL" id="M58026">
    <property type="protein sequence ID" value="AAA36356.1"/>
    <property type="molecule type" value="mRNA"/>
</dbReference>
<dbReference type="EMBL" id="X13461">
    <property type="protein sequence ID" value="CAA31809.1"/>
    <property type="molecule type" value="Genomic_DNA"/>
</dbReference>
<dbReference type="EMBL" id="AL732437">
    <property type="status" value="NOT_ANNOTATED_CDS"/>
    <property type="molecule type" value="Genomic_DNA"/>
</dbReference>
<dbReference type="EMBL" id="AK313934">
    <property type="protein sequence ID" value="BAG36653.1"/>
    <property type="molecule type" value="mRNA"/>
</dbReference>
<dbReference type="EMBL" id="CH471072">
    <property type="protein sequence ID" value="EAW86443.1"/>
    <property type="molecule type" value="Genomic_DNA"/>
</dbReference>
<dbReference type="EMBL" id="BC031889">
    <property type="protein sequence ID" value="AAH31889.1"/>
    <property type="molecule type" value="mRNA"/>
</dbReference>
<dbReference type="CCDS" id="CCDS7069.1"/>
<dbReference type="PIR" id="A38278">
    <property type="entry name" value="MCHUNB"/>
</dbReference>
<dbReference type="RefSeq" id="NP_005176.1">
    <property type="nucleotide sequence ID" value="NM_005185.4"/>
</dbReference>
<dbReference type="PDB" id="1GGZ">
    <property type="method" value="X-ray"/>
    <property type="resolution" value="1.50 A"/>
    <property type="chains" value="A=2-149"/>
</dbReference>
<dbReference type="PDBsum" id="1GGZ"/>
<dbReference type="SMR" id="P27482"/>
<dbReference type="BioGRID" id="107261">
    <property type="interactions" value="277"/>
</dbReference>
<dbReference type="FunCoup" id="P27482">
    <property type="interactions" value="2343"/>
</dbReference>
<dbReference type="IntAct" id="P27482">
    <property type="interactions" value="216"/>
</dbReference>
<dbReference type="MINT" id="P27482"/>
<dbReference type="STRING" id="9606.ENSP00000315299"/>
<dbReference type="BindingDB" id="P27482"/>
<dbReference type="ChEMBL" id="CHEMBL5169127"/>
<dbReference type="iPTMnet" id="P27482"/>
<dbReference type="PhosphoSitePlus" id="P27482"/>
<dbReference type="BioMuta" id="CALML3"/>
<dbReference type="DMDM" id="115502"/>
<dbReference type="jPOST" id="P27482"/>
<dbReference type="MassIVE" id="P27482"/>
<dbReference type="PaxDb" id="9606-ENSP00000315299"/>
<dbReference type="PeptideAtlas" id="P27482"/>
<dbReference type="ProteomicsDB" id="54395"/>
<dbReference type="Pumba" id="P27482"/>
<dbReference type="TopDownProteomics" id="P27482"/>
<dbReference type="Antibodypedia" id="24109">
    <property type="antibodies" value="137 antibodies from 21 providers"/>
</dbReference>
<dbReference type="DNASU" id="810"/>
<dbReference type="Ensembl" id="ENST00000315238.3">
    <property type="protein sequence ID" value="ENSP00000315299.1"/>
    <property type="gene ID" value="ENSG00000178363.5"/>
</dbReference>
<dbReference type="GeneID" id="810"/>
<dbReference type="KEGG" id="hsa:810"/>
<dbReference type="MANE-Select" id="ENST00000315238.3">
    <property type="protein sequence ID" value="ENSP00000315299.1"/>
    <property type="RefSeq nucleotide sequence ID" value="NM_005185.4"/>
    <property type="RefSeq protein sequence ID" value="NP_005176.1"/>
</dbReference>
<dbReference type="UCSC" id="uc001iie.2">
    <property type="organism name" value="human"/>
</dbReference>
<dbReference type="AGR" id="HGNC:1452"/>
<dbReference type="CTD" id="810"/>
<dbReference type="DisGeNET" id="810"/>
<dbReference type="GeneCards" id="CALML3"/>
<dbReference type="HGNC" id="HGNC:1452">
    <property type="gene designation" value="CALML3"/>
</dbReference>
<dbReference type="HPA" id="ENSG00000178363">
    <property type="expression patterns" value="Tissue enhanced (esophagus, skin, vagina)"/>
</dbReference>
<dbReference type="MIM" id="114184">
    <property type="type" value="gene"/>
</dbReference>
<dbReference type="neXtProt" id="NX_P27482"/>
<dbReference type="OpenTargets" id="ENSG00000178363"/>
<dbReference type="PharmGKB" id="PA26044"/>
<dbReference type="VEuPathDB" id="HostDB:ENSG00000178363"/>
<dbReference type="eggNOG" id="KOG0027">
    <property type="taxonomic scope" value="Eukaryota"/>
</dbReference>
<dbReference type="GeneTree" id="ENSGT00950000182980"/>
<dbReference type="HOGENOM" id="CLU_061288_2_0_1"/>
<dbReference type="InParanoid" id="P27482"/>
<dbReference type="OMA" id="CITTHEL"/>
<dbReference type="OrthoDB" id="26525at2759"/>
<dbReference type="PAN-GO" id="P27482">
    <property type="GO annotations" value="2 GO annotations based on evolutionary models"/>
</dbReference>
<dbReference type="PhylomeDB" id="P27482"/>
<dbReference type="TreeFam" id="TF300912"/>
<dbReference type="PathwayCommons" id="P27482"/>
<dbReference type="SignaLink" id="P27482"/>
<dbReference type="BioGRID-ORCS" id="810">
    <property type="hits" value="14 hits in 1142 CRISPR screens"/>
</dbReference>
<dbReference type="ChiTaRS" id="CALML3">
    <property type="organism name" value="human"/>
</dbReference>
<dbReference type="EvolutionaryTrace" id="P27482"/>
<dbReference type="GeneWiki" id="CALML3"/>
<dbReference type="GenomeRNAi" id="810"/>
<dbReference type="Pharos" id="P27482">
    <property type="development level" value="Tbio"/>
</dbReference>
<dbReference type="PRO" id="PR:P27482"/>
<dbReference type="Proteomes" id="UP000005640">
    <property type="component" value="Chromosome 10"/>
</dbReference>
<dbReference type="RNAct" id="P27482">
    <property type="molecule type" value="protein"/>
</dbReference>
<dbReference type="Bgee" id="ENSG00000178363">
    <property type="expression patterns" value="Expressed in lower esophagus mucosa and 114 other cell types or tissues"/>
</dbReference>
<dbReference type="GO" id="GO:0005813">
    <property type="term" value="C:centrosome"/>
    <property type="evidence" value="ECO:0000318"/>
    <property type="project" value="GO_Central"/>
</dbReference>
<dbReference type="GO" id="GO:0005737">
    <property type="term" value="C:cytoplasm"/>
    <property type="evidence" value="ECO:0000318"/>
    <property type="project" value="GO_Central"/>
</dbReference>
<dbReference type="GO" id="GO:0070062">
    <property type="term" value="C:extracellular exosome"/>
    <property type="evidence" value="ECO:0007005"/>
    <property type="project" value="UniProtKB"/>
</dbReference>
<dbReference type="GO" id="GO:0043209">
    <property type="term" value="C:myelin sheath"/>
    <property type="evidence" value="ECO:0000318"/>
    <property type="project" value="GO_Central"/>
</dbReference>
<dbReference type="GO" id="GO:0005509">
    <property type="term" value="F:calcium ion binding"/>
    <property type="evidence" value="ECO:0000318"/>
    <property type="project" value="GO_Central"/>
</dbReference>
<dbReference type="CDD" id="cd00051">
    <property type="entry name" value="EFh"/>
    <property type="match status" value="2"/>
</dbReference>
<dbReference type="FunFam" id="1.10.238.10:FF:000006">
    <property type="entry name" value="Calmodulin 1"/>
    <property type="match status" value="1"/>
</dbReference>
<dbReference type="FunFam" id="1.10.238.10:FF:000398">
    <property type="entry name" value="Calmodulin-like protein 3"/>
    <property type="match status" value="1"/>
</dbReference>
<dbReference type="Gene3D" id="1.10.238.10">
    <property type="entry name" value="EF-hand"/>
    <property type="match status" value="3"/>
</dbReference>
<dbReference type="InterPro" id="IPR050230">
    <property type="entry name" value="CALM/Myosin/TropC-like"/>
</dbReference>
<dbReference type="InterPro" id="IPR011992">
    <property type="entry name" value="EF-hand-dom_pair"/>
</dbReference>
<dbReference type="InterPro" id="IPR018247">
    <property type="entry name" value="EF_Hand_1_Ca_BS"/>
</dbReference>
<dbReference type="InterPro" id="IPR002048">
    <property type="entry name" value="EF_hand_dom"/>
</dbReference>
<dbReference type="PANTHER" id="PTHR23048:SF0">
    <property type="entry name" value="CALMODULIN LIKE 3"/>
    <property type="match status" value="1"/>
</dbReference>
<dbReference type="PANTHER" id="PTHR23048">
    <property type="entry name" value="MYOSIN LIGHT CHAIN 1, 3"/>
    <property type="match status" value="1"/>
</dbReference>
<dbReference type="Pfam" id="PF13499">
    <property type="entry name" value="EF-hand_7"/>
    <property type="match status" value="2"/>
</dbReference>
<dbReference type="SMART" id="SM00054">
    <property type="entry name" value="EFh"/>
    <property type="match status" value="4"/>
</dbReference>
<dbReference type="SUPFAM" id="SSF47473">
    <property type="entry name" value="EF-hand"/>
    <property type="match status" value="1"/>
</dbReference>
<dbReference type="PROSITE" id="PS00018">
    <property type="entry name" value="EF_HAND_1"/>
    <property type="match status" value="4"/>
</dbReference>
<dbReference type="PROSITE" id="PS50222">
    <property type="entry name" value="EF_HAND_2"/>
    <property type="match status" value="4"/>
</dbReference>
<comment type="function">
    <text evidence="2 3">May function as a specific light chain of unconventional myosin-10 (MYO10), also enhances MYO10 translation, possibly by acting as a chaperone for the emerging MYO10 heavy chain protein. May compete with calmodulin by binding, with different affinities, to cellular substrates.</text>
</comment>
<comment type="subunit">
    <text evidence="2">Interacts with MYO10, the interaction is calcium-dependent and essential for MYO10 function in filopodial extension.</text>
</comment>
<comment type="interaction">
    <interactant intactId="EBI-747537">
        <id>P27482</id>
    </interactant>
    <interactant intactId="EBI-11944935">
        <id>Q15051-2</id>
        <label>IQCB1</label>
    </interactant>
    <organismsDiffer>false</organismsDiffer>
    <experiments>3</experiments>
</comment>
<comment type="interaction">
    <interactant intactId="EBI-747537">
        <id>P27482</id>
    </interactant>
    <interactant intactId="EBI-745878">
        <id>Q9H0B3</id>
        <label>IQCN</label>
    </interactant>
    <organismsDiffer>false</organismsDiffer>
    <experiments>4</experiments>
</comment>
<comment type="interaction">
    <interactant intactId="EBI-747537">
        <id>P27482</id>
    </interactant>
    <interactant intactId="EBI-10171456">
        <id>A0JP07</id>
        <label>KIAA1683</label>
    </interactant>
    <organismsDiffer>false</organismsDiffer>
    <experiments>3</experiments>
</comment>
<comment type="interaction">
    <interactant intactId="EBI-747537">
        <id>P27482</id>
    </interactant>
    <interactant intactId="EBI-744790">
        <id>Q8NCR3</id>
        <label>MFI</label>
    </interactant>
    <organismsDiffer>false</organismsDiffer>
    <experiments>3</experiments>
</comment>
<comment type="interaction">
    <interactant intactId="EBI-747537">
        <id>P27482</id>
    </interactant>
    <interactant intactId="EBI-307061">
        <id>Q9HD67</id>
        <label>MYO10</label>
    </interactant>
    <organismsDiffer>false</organismsDiffer>
    <experiments>3</experiments>
</comment>
<comment type="interaction">
    <interactant intactId="EBI-747537">
        <id>P27482</id>
    </interactant>
    <interactant intactId="EBI-750109">
        <id>Q9NYB0</id>
        <label>TERF2IP</label>
    </interactant>
    <organismsDiffer>false</organismsDiffer>
    <experiments>2</experiments>
</comment>
<comment type="tissue specificity">
    <text evidence="4">Expressed in normal mammary, prostate, cervical, and epidermal tissues. It is greatly reduced or undetectable in transformed cells.</text>
</comment>
<comment type="induction">
    <text evidence="4">By TGFB1.</text>
</comment>
<comment type="miscellaneous">
    <text>Binds four calcium ions.</text>
</comment>
<comment type="similarity">
    <text evidence="5">Belongs to the calmodulin family.</text>
</comment>
<accession>P27482</accession>
<accession>B2R9V6</accession>
<accession>Q5SQI4</accession>
<sequence>MADQLTEEQVTEFKEAFSLFDKDGDGCITTRELGTVMRSLGQNPTEAELRDMMSEIDRDGNGTVDFPEFLGMMARKMKDTDNEEEIREAFRVFDKDGNGFVSAAELRHVMTRLGEKLSDEEVDEMIRAADTDGDGQVNYEEFVRVLVSK</sequence>
<feature type="chain" id="PRO_0000073547" description="Calmodulin-like protein 3">
    <location>
        <begin position="1"/>
        <end position="149"/>
    </location>
</feature>
<feature type="domain" description="EF-hand 1" evidence="1">
    <location>
        <begin position="8"/>
        <end position="43"/>
    </location>
</feature>
<feature type="domain" description="EF-hand 2" evidence="1">
    <location>
        <begin position="44"/>
        <end position="79"/>
    </location>
</feature>
<feature type="domain" description="EF-hand 3" evidence="1">
    <location>
        <begin position="81"/>
        <end position="116"/>
    </location>
</feature>
<feature type="domain" description="EF-hand 4" evidence="1">
    <location>
        <begin position="117"/>
        <end position="149"/>
    </location>
</feature>
<feature type="binding site" evidence="1">
    <location>
        <position position="21"/>
    </location>
    <ligand>
        <name>Ca(2+)</name>
        <dbReference type="ChEBI" id="CHEBI:29108"/>
        <label>1</label>
    </ligand>
</feature>
<feature type="binding site" evidence="1">
    <location>
        <position position="23"/>
    </location>
    <ligand>
        <name>Ca(2+)</name>
        <dbReference type="ChEBI" id="CHEBI:29108"/>
        <label>1</label>
    </ligand>
</feature>
<feature type="binding site" evidence="1">
    <location>
        <position position="25"/>
    </location>
    <ligand>
        <name>Ca(2+)</name>
        <dbReference type="ChEBI" id="CHEBI:29108"/>
        <label>1</label>
    </ligand>
</feature>
<feature type="binding site" evidence="1">
    <location>
        <position position="27"/>
    </location>
    <ligand>
        <name>Ca(2+)</name>
        <dbReference type="ChEBI" id="CHEBI:29108"/>
        <label>1</label>
    </ligand>
</feature>
<feature type="binding site" evidence="1">
    <location>
        <position position="32"/>
    </location>
    <ligand>
        <name>Ca(2+)</name>
        <dbReference type="ChEBI" id="CHEBI:29108"/>
        <label>1</label>
    </ligand>
</feature>
<feature type="binding site" evidence="1">
    <location>
        <position position="57"/>
    </location>
    <ligand>
        <name>Ca(2+)</name>
        <dbReference type="ChEBI" id="CHEBI:29108"/>
        <label>2</label>
    </ligand>
</feature>
<feature type="binding site" evidence="1">
    <location>
        <position position="59"/>
    </location>
    <ligand>
        <name>Ca(2+)</name>
        <dbReference type="ChEBI" id="CHEBI:29108"/>
        <label>2</label>
    </ligand>
</feature>
<feature type="binding site" evidence="1">
    <location>
        <position position="61"/>
    </location>
    <ligand>
        <name>Ca(2+)</name>
        <dbReference type="ChEBI" id="CHEBI:29108"/>
        <label>2</label>
    </ligand>
</feature>
<feature type="binding site" evidence="1">
    <location>
        <position position="63"/>
    </location>
    <ligand>
        <name>Ca(2+)</name>
        <dbReference type="ChEBI" id="CHEBI:29108"/>
        <label>2</label>
    </ligand>
</feature>
<feature type="binding site" evidence="1">
    <location>
        <position position="68"/>
    </location>
    <ligand>
        <name>Ca(2+)</name>
        <dbReference type="ChEBI" id="CHEBI:29108"/>
        <label>2</label>
    </ligand>
</feature>
<feature type="binding site" evidence="1">
    <location>
        <position position="94"/>
    </location>
    <ligand>
        <name>Ca(2+)</name>
        <dbReference type="ChEBI" id="CHEBI:29108"/>
        <label>3</label>
    </ligand>
</feature>
<feature type="binding site" evidence="1">
    <location>
        <position position="96"/>
    </location>
    <ligand>
        <name>Ca(2+)</name>
        <dbReference type="ChEBI" id="CHEBI:29108"/>
        <label>3</label>
    </ligand>
</feature>
<feature type="binding site" evidence="1">
    <location>
        <position position="98"/>
    </location>
    <ligand>
        <name>Ca(2+)</name>
        <dbReference type="ChEBI" id="CHEBI:29108"/>
        <label>3</label>
    </ligand>
</feature>
<feature type="binding site" evidence="1">
    <location>
        <position position="105"/>
    </location>
    <ligand>
        <name>Ca(2+)</name>
        <dbReference type="ChEBI" id="CHEBI:29108"/>
        <label>3</label>
    </ligand>
</feature>
<feature type="binding site" evidence="1">
    <location>
        <position position="130"/>
    </location>
    <ligand>
        <name>Ca(2+)</name>
        <dbReference type="ChEBI" id="CHEBI:29108"/>
        <label>4</label>
    </ligand>
</feature>
<feature type="binding site" evidence="1">
    <location>
        <position position="132"/>
    </location>
    <ligand>
        <name>Ca(2+)</name>
        <dbReference type="ChEBI" id="CHEBI:29108"/>
        <label>4</label>
    </ligand>
</feature>
<feature type="binding site" evidence="1">
    <location>
        <position position="134"/>
    </location>
    <ligand>
        <name>Ca(2+)</name>
        <dbReference type="ChEBI" id="CHEBI:29108"/>
        <label>4</label>
    </ligand>
</feature>
<feature type="binding site" evidence="1">
    <location>
        <position position="136"/>
    </location>
    <ligand>
        <name>Ca(2+)</name>
        <dbReference type="ChEBI" id="CHEBI:29108"/>
        <label>4</label>
    </ligand>
</feature>
<feature type="binding site" evidence="1">
    <location>
        <position position="141"/>
    </location>
    <ligand>
        <name>Ca(2+)</name>
        <dbReference type="ChEBI" id="CHEBI:29108"/>
        <label>4</label>
    </ligand>
</feature>
<feature type="helix" evidence="6">
    <location>
        <begin position="7"/>
        <end position="20"/>
    </location>
</feature>
<feature type="strand" evidence="6">
    <location>
        <begin position="25"/>
        <end position="28"/>
    </location>
</feature>
<feature type="helix" evidence="6">
    <location>
        <begin position="30"/>
        <end position="39"/>
    </location>
</feature>
<feature type="helix" evidence="6">
    <location>
        <begin position="46"/>
        <end position="54"/>
    </location>
</feature>
<feature type="strand" evidence="6">
    <location>
        <begin position="61"/>
        <end position="65"/>
    </location>
</feature>
<feature type="helix" evidence="6">
    <location>
        <begin position="66"/>
        <end position="93"/>
    </location>
</feature>
<feature type="strand" evidence="6">
    <location>
        <begin position="98"/>
        <end position="101"/>
    </location>
</feature>
<feature type="helix" evidence="6">
    <location>
        <begin position="103"/>
        <end position="112"/>
    </location>
</feature>
<feature type="helix" evidence="6">
    <location>
        <begin position="119"/>
        <end position="129"/>
    </location>
</feature>
<feature type="strand" evidence="6">
    <location>
        <begin position="133"/>
        <end position="138"/>
    </location>
</feature>
<feature type="helix" evidence="6">
    <location>
        <begin position="139"/>
        <end position="147"/>
    </location>
</feature>
<name>CALL3_HUMAN</name>
<reference key="1">
    <citation type="journal article" date="1990" name="Proc. Natl. Acad. Sci. U.S.A.">
        <title>Down-regulation of a calmodulin-related gene during transformation of human mammary epithelial cells.</title>
        <authorList>
            <person name="Yaswen P."/>
            <person name="Smoll A."/>
            <person name="Peehl D.M."/>
            <person name="Trask D.K."/>
            <person name="Sager R."/>
            <person name="Stampfer M.R."/>
        </authorList>
    </citation>
    <scope>NUCLEOTIDE SEQUENCE [MRNA]</scope>
    <scope>TISSUE SPECIFICITY</scope>
    <scope>INDUCTION BY TGFB1</scope>
</reference>
<reference key="2">
    <citation type="journal article" date="1988" name="FEBS Lett.">
        <title>Characterization of an intronless human calmodulin-like pseudogene.</title>
        <authorList>
            <person name="Koller M."/>
            <person name="Strehler E.E."/>
        </authorList>
    </citation>
    <scope>NUCLEOTIDE SEQUENCE [GENOMIC DNA]</scope>
</reference>
<reference key="3">
    <citation type="submission" date="1992-01" db="EMBL/GenBank/DDBJ databases">
        <authorList>
            <person name="Koller M."/>
        </authorList>
    </citation>
    <scope>SEQUENCE REVISION</scope>
</reference>
<reference key="4">
    <citation type="journal article" date="2004" name="Nat. Genet.">
        <title>Complete sequencing and characterization of 21,243 full-length human cDNAs.</title>
        <authorList>
            <person name="Ota T."/>
            <person name="Suzuki Y."/>
            <person name="Nishikawa T."/>
            <person name="Otsuki T."/>
            <person name="Sugiyama T."/>
            <person name="Irie R."/>
            <person name="Wakamatsu A."/>
            <person name="Hayashi K."/>
            <person name="Sato H."/>
            <person name="Nagai K."/>
            <person name="Kimura K."/>
            <person name="Makita H."/>
            <person name="Sekine M."/>
            <person name="Obayashi M."/>
            <person name="Nishi T."/>
            <person name="Shibahara T."/>
            <person name="Tanaka T."/>
            <person name="Ishii S."/>
            <person name="Yamamoto J."/>
            <person name="Saito K."/>
            <person name="Kawai Y."/>
            <person name="Isono Y."/>
            <person name="Nakamura Y."/>
            <person name="Nagahari K."/>
            <person name="Murakami K."/>
            <person name="Yasuda T."/>
            <person name="Iwayanagi T."/>
            <person name="Wagatsuma M."/>
            <person name="Shiratori A."/>
            <person name="Sudo H."/>
            <person name="Hosoiri T."/>
            <person name="Kaku Y."/>
            <person name="Kodaira H."/>
            <person name="Kondo H."/>
            <person name="Sugawara M."/>
            <person name="Takahashi M."/>
            <person name="Kanda K."/>
            <person name="Yokoi T."/>
            <person name="Furuya T."/>
            <person name="Kikkawa E."/>
            <person name="Omura Y."/>
            <person name="Abe K."/>
            <person name="Kamihara K."/>
            <person name="Katsuta N."/>
            <person name="Sato K."/>
            <person name="Tanikawa M."/>
            <person name="Yamazaki M."/>
            <person name="Ninomiya K."/>
            <person name="Ishibashi T."/>
            <person name="Yamashita H."/>
            <person name="Murakawa K."/>
            <person name="Fujimori K."/>
            <person name="Tanai H."/>
            <person name="Kimata M."/>
            <person name="Watanabe M."/>
            <person name="Hiraoka S."/>
            <person name="Chiba Y."/>
            <person name="Ishida S."/>
            <person name="Ono Y."/>
            <person name="Takiguchi S."/>
            <person name="Watanabe S."/>
            <person name="Yosida M."/>
            <person name="Hotuta T."/>
            <person name="Kusano J."/>
            <person name="Kanehori K."/>
            <person name="Takahashi-Fujii A."/>
            <person name="Hara H."/>
            <person name="Tanase T.-O."/>
            <person name="Nomura Y."/>
            <person name="Togiya S."/>
            <person name="Komai F."/>
            <person name="Hara R."/>
            <person name="Takeuchi K."/>
            <person name="Arita M."/>
            <person name="Imose N."/>
            <person name="Musashino K."/>
            <person name="Yuuki H."/>
            <person name="Oshima A."/>
            <person name="Sasaki N."/>
            <person name="Aotsuka S."/>
            <person name="Yoshikawa Y."/>
            <person name="Matsunawa H."/>
            <person name="Ichihara T."/>
            <person name="Shiohata N."/>
            <person name="Sano S."/>
            <person name="Moriya S."/>
            <person name="Momiyama H."/>
            <person name="Satoh N."/>
            <person name="Takami S."/>
            <person name="Terashima Y."/>
            <person name="Suzuki O."/>
            <person name="Nakagawa S."/>
            <person name="Senoh A."/>
            <person name="Mizoguchi H."/>
            <person name="Goto Y."/>
            <person name="Shimizu F."/>
            <person name="Wakebe H."/>
            <person name="Hishigaki H."/>
            <person name="Watanabe T."/>
            <person name="Sugiyama A."/>
            <person name="Takemoto M."/>
            <person name="Kawakami B."/>
            <person name="Yamazaki M."/>
            <person name="Watanabe K."/>
            <person name="Kumagai A."/>
            <person name="Itakura S."/>
            <person name="Fukuzumi Y."/>
            <person name="Fujimori Y."/>
            <person name="Komiyama M."/>
            <person name="Tashiro H."/>
            <person name="Tanigami A."/>
            <person name="Fujiwara T."/>
            <person name="Ono T."/>
            <person name="Yamada K."/>
            <person name="Fujii Y."/>
            <person name="Ozaki K."/>
            <person name="Hirao M."/>
            <person name="Ohmori Y."/>
            <person name="Kawabata A."/>
            <person name="Hikiji T."/>
            <person name="Kobatake N."/>
            <person name="Inagaki H."/>
            <person name="Ikema Y."/>
            <person name="Okamoto S."/>
            <person name="Okitani R."/>
            <person name="Kawakami T."/>
            <person name="Noguchi S."/>
            <person name="Itoh T."/>
            <person name="Shigeta K."/>
            <person name="Senba T."/>
            <person name="Matsumura K."/>
            <person name="Nakajima Y."/>
            <person name="Mizuno T."/>
            <person name="Morinaga M."/>
            <person name="Sasaki M."/>
            <person name="Togashi T."/>
            <person name="Oyama M."/>
            <person name="Hata H."/>
            <person name="Watanabe M."/>
            <person name="Komatsu T."/>
            <person name="Mizushima-Sugano J."/>
            <person name="Satoh T."/>
            <person name="Shirai Y."/>
            <person name="Takahashi Y."/>
            <person name="Nakagawa K."/>
            <person name="Okumura K."/>
            <person name="Nagase T."/>
            <person name="Nomura N."/>
            <person name="Kikuchi H."/>
            <person name="Masuho Y."/>
            <person name="Yamashita R."/>
            <person name="Nakai K."/>
            <person name="Yada T."/>
            <person name="Nakamura Y."/>
            <person name="Ohara O."/>
            <person name="Isogai T."/>
            <person name="Sugano S."/>
        </authorList>
    </citation>
    <scope>NUCLEOTIDE SEQUENCE [LARGE SCALE MRNA]</scope>
    <source>
        <tissue>Esophagus</tissue>
    </source>
</reference>
<reference key="5">
    <citation type="journal article" date="2004" name="Nature">
        <title>The DNA sequence and comparative analysis of human chromosome 10.</title>
        <authorList>
            <person name="Deloukas P."/>
            <person name="Earthrowl M.E."/>
            <person name="Grafham D.V."/>
            <person name="Rubenfield M."/>
            <person name="French L."/>
            <person name="Steward C.A."/>
            <person name="Sims S.K."/>
            <person name="Jones M.C."/>
            <person name="Searle S."/>
            <person name="Scott C."/>
            <person name="Howe K."/>
            <person name="Hunt S.E."/>
            <person name="Andrews T.D."/>
            <person name="Gilbert J.G.R."/>
            <person name="Swarbreck D."/>
            <person name="Ashurst J.L."/>
            <person name="Taylor A."/>
            <person name="Battles J."/>
            <person name="Bird C.P."/>
            <person name="Ainscough R."/>
            <person name="Almeida J.P."/>
            <person name="Ashwell R.I.S."/>
            <person name="Ambrose K.D."/>
            <person name="Babbage A.K."/>
            <person name="Bagguley C.L."/>
            <person name="Bailey J."/>
            <person name="Banerjee R."/>
            <person name="Bates K."/>
            <person name="Beasley H."/>
            <person name="Bray-Allen S."/>
            <person name="Brown A.J."/>
            <person name="Brown J.Y."/>
            <person name="Burford D.C."/>
            <person name="Burrill W."/>
            <person name="Burton J."/>
            <person name="Cahill P."/>
            <person name="Camire D."/>
            <person name="Carter N.P."/>
            <person name="Chapman J.C."/>
            <person name="Clark S.Y."/>
            <person name="Clarke G."/>
            <person name="Clee C.M."/>
            <person name="Clegg S."/>
            <person name="Corby N."/>
            <person name="Coulson A."/>
            <person name="Dhami P."/>
            <person name="Dutta I."/>
            <person name="Dunn M."/>
            <person name="Faulkner L."/>
            <person name="Frankish A."/>
            <person name="Frankland J.A."/>
            <person name="Garner P."/>
            <person name="Garnett J."/>
            <person name="Gribble S."/>
            <person name="Griffiths C."/>
            <person name="Grocock R."/>
            <person name="Gustafson E."/>
            <person name="Hammond S."/>
            <person name="Harley J.L."/>
            <person name="Hart E."/>
            <person name="Heath P.D."/>
            <person name="Ho T.P."/>
            <person name="Hopkins B."/>
            <person name="Horne J."/>
            <person name="Howden P.J."/>
            <person name="Huckle E."/>
            <person name="Hynds C."/>
            <person name="Johnson C."/>
            <person name="Johnson D."/>
            <person name="Kana A."/>
            <person name="Kay M."/>
            <person name="Kimberley A.M."/>
            <person name="Kershaw J.K."/>
            <person name="Kokkinaki M."/>
            <person name="Laird G.K."/>
            <person name="Lawlor S."/>
            <person name="Lee H.M."/>
            <person name="Leongamornlert D.A."/>
            <person name="Laird G."/>
            <person name="Lloyd C."/>
            <person name="Lloyd D.M."/>
            <person name="Loveland J."/>
            <person name="Lovell J."/>
            <person name="McLaren S."/>
            <person name="McLay K.E."/>
            <person name="McMurray A."/>
            <person name="Mashreghi-Mohammadi M."/>
            <person name="Matthews L."/>
            <person name="Milne S."/>
            <person name="Nickerson T."/>
            <person name="Nguyen M."/>
            <person name="Overton-Larty E."/>
            <person name="Palmer S.A."/>
            <person name="Pearce A.V."/>
            <person name="Peck A.I."/>
            <person name="Pelan S."/>
            <person name="Phillimore B."/>
            <person name="Porter K."/>
            <person name="Rice C.M."/>
            <person name="Rogosin A."/>
            <person name="Ross M.T."/>
            <person name="Sarafidou T."/>
            <person name="Sehra H.K."/>
            <person name="Shownkeen R."/>
            <person name="Skuce C.D."/>
            <person name="Smith M."/>
            <person name="Standring L."/>
            <person name="Sycamore N."/>
            <person name="Tester J."/>
            <person name="Thorpe A."/>
            <person name="Torcasso W."/>
            <person name="Tracey A."/>
            <person name="Tromans A."/>
            <person name="Tsolas J."/>
            <person name="Wall M."/>
            <person name="Walsh J."/>
            <person name="Wang H."/>
            <person name="Weinstock K."/>
            <person name="West A.P."/>
            <person name="Willey D.L."/>
            <person name="Whitehead S.L."/>
            <person name="Wilming L."/>
            <person name="Wray P.W."/>
            <person name="Young L."/>
            <person name="Chen Y."/>
            <person name="Lovering R.C."/>
            <person name="Moschonas N.K."/>
            <person name="Siebert R."/>
            <person name="Fechtel K."/>
            <person name="Bentley D."/>
            <person name="Durbin R.M."/>
            <person name="Hubbard T."/>
            <person name="Doucette-Stamm L."/>
            <person name="Beck S."/>
            <person name="Smith D.R."/>
            <person name="Rogers J."/>
        </authorList>
    </citation>
    <scope>NUCLEOTIDE SEQUENCE [LARGE SCALE GENOMIC DNA]</scope>
</reference>
<reference key="6">
    <citation type="submission" date="2005-09" db="EMBL/GenBank/DDBJ databases">
        <authorList>
            <person name="Mural R.J."/>
            <person name="Istrail S."/>
            <person name="Sutton G.G."/>
            <person name="Florea L."/>
            <person name="Halpern A.L."/>
            <person name="Mobarry C.M."/>
            <person name="Lippert R."/>
            <person name="Walenz B."/>
            <person name="Shatkay H."/>
            <person name="Dew I."/>
            <person name="Miller J.R."/>
            <person name="Flanigan M.J."/>
            <person name="Edwards N.J."/>
            <person name="Bolanos R."/>
            <person name="Fasulo D."/>
            <person name="Halldorsson B.V."/>
            <person name="Hannenhalli S."/>
            <person name="Turner R."/>
            <person name="Yooseph S."/>
            <person name="Lu F."/>
            <person name="Nusskern D.R."/>
            <person name="Shue B.C."/>
            <person name="Zheng X.H."/>
            <person name="Zhong F."/>
            <person name="Delcher A.L."/>
            <person name="Huson D.H."/>
            <person name="Kravitz S.A."/>
            <person name="Mouchard L."/>
            <person name="Reinert K."/>
            <person name="Remington K.A."/>
            <person name="Clark A.G."/>
            <person name="Waterman M.S."/>
            <person name="Eichler E.E."/>
            <person name="Adams M.D."/>
            <person name="Hunkapiller M.W."/>
            <person name="Myers E.W."/>
            <person name="Venter J.C."/>
        </authorList>
    </citation>
    <scope>NUCLEOTIDE SEQUENCE [LARGE SCALE GENOMIC DNA]</scope>
</reference>
<reference key="7">
    <citation type="journal article" date="2004" name="Genome Res.">
        <title>The status, quality, and expansion of the NIH full-length cDNA project: the Mammalian Gene Collection (MGC).</title>
        <authorList>
            <consortium name="The MGC Project Team"/>
        </authorList>
    </citation>
    <scope>NUCLEOTIDE SEQUENCE [LARGE SCALE MRNA]</scope>
    <source>
        <tissue>Skin</tissue>
    </source>
</reference>
<reference key="8">
    <citation type="journal article" date="1992" name="Biochemistry">
        <title>Characterization of the human calmodulin-like protein expressed in Escherichia coli.</title>
        <authorList>
            <person name="Rhyner J.A."/>
            <person name="Koller M."/>
            <person name="Durussel-Gerber I."/>
            <person name="Cox J.A."/>
            <person name="Strehler E.E."/>
        </authorList>
    </citation>
    <scope>CHARACTERIZATION</scope>
</reference>
<reference key="9">
    <citation type="journal article" date="2001" name="J. Biol. Chem.">
        <title>The tumor-sensitive calmodulin-like protein is a specific light chain of human unconventional myosin X.</title>
        <authorList>
            <person name="Rogers M.S."/>
            <person name="Strehler E.E."/>
        </authorList>
    </citation>
    <scope>FUNCTION</scope>
    <scope>INTERACTION WITH MYO10</scope>
</reference>
<reference key="10">
    <citation type="journal article" date="2008" name="Biochem. Biophys. Res. Commun.">
        <title>Calmodulin-like protein enhances myosin-10 translation.</title>
        <authorList>
            <person name="Bennett R.D."/>
            <person name="Strehler E.E."/>
        </authorList>
    </citation>
    <scope>FUNCTION</scope>
</reference>
<reference key="11">
    <citation type="journal article" date="2002" name="FEBS Lett.">
        <title>Crystal structure of human calmodulin-like protein: insights into its functional role.</title>
        <authorList>
            <person name="Han B.G."/>
            <person name="Han M."/>
            <person name="Sui H."/>
            <person name="Yaswen P."/>
            <person name="Walian P.J."/>
            <person name="Jap B.K."/>
        </authorList>
    </citation>
    <scope>X-RAY CRYSTALLOGRAPHY (1.5 ANGSTROMS)</scope>
</reference>
<gene>
    <name type="primary">CALML3</name>
</gene>